<dbReference type="EC" id="3.1.3.48"/>
<dbReference type="EMBL" id="AJ938182">
    <property type="protein sequence ID" value="CAI81502.1"/>
    <property type="molecule type" value="Genomic_DNA"/>
</dbReference>
<dbReference type="RefSeq" id="WP_000228664.1">
    <property type="nucleotide sequence ID" value="NC_007622.1"/>
</dbReference>
<dbReference type="SMR" id="Q2YU46"/>
<dbReference type="KEGG" id="sab:SAB1813"/>
<dbReference type="HOGENOM" id="CLU_071415_2_3_9"/>
<dbReference type="GO" id="GO:0005576">
    <property type="term" value="C:extracellular region"/>
    <property type="evidence" value="ECO:0007669"/>
    <property type="project" value="UniProtKB-SubCell"/>
</dbReference>
<dbReference type="GO" id="GO:0004725">
    <property type="term" value="F:protein tyrosine phosphatase activity"/>
    <property type="evidence" value="ECO:0007669"/>
    <property type="project" value="UniProtKB-EC"/>
</dbReference>
<dbReference type="CDD" id="cd16343">
    <property type="entry name" value="LMWPTP"/>
    <property type="match status" value="1"/>
</dbReference>
<dbReference type="FunFam" id="3.40.50.2300:FF:000268">
    <property type="entry name" value="Low molecular weight protein-tyrosine-phosphatase PtpA"/>
    <property type="match status" value="1"/>
</dbReference>
<dbReference type="Gene3D" id="3.40.50.2300">
    <property type="match status" value="1"/>
</dbReference>
<dbReference type="InterPro" id="IPR050438">
    <property type="entry name" value="LMW_PTPase"/>
</dbReference>
<dbReference type="InterPro" id="IPR023485">
    <property type="entry name" value="Ptyr_pPase"/>
</dbReference>
<dbReference type="InterPro" id="IPR036196">
    <property type="entry name" value="Ptyr_pPase_sf"/>
</dbReference>
<dbReference type="InterPro" id="IPR017867">
    <property type="entry name" value="Tyr_phospatase_low_mol_wt"/>
</dbReference>
<dbReference type="PANTHER" id="PTHR11717:SF7">
    <property type="entry name" value="LOW MOLECULAR WEIGHT PHOSPHOTYROSINE PROTEIN PHOSPHATASE"/>
    <property type="match status" value="1"/>
</dbReference>
<dbReference type="PANTHER" id="PTHR11717">
    <property type="entry name" value="LOW MOLECULAR WEIGHT PROTEIN TYROSINE PHOSPHATASE"/>
    <property type="match status" value="1"/>
</dbReference>
<dbReference type="Pfam" id="PF01451">
    <property type="entry name" value="LMWPc"/>
    <property type="match status" value="1"/>
</dbReference>
<dbReference type="PRINTS" id="PR00719">
    <property type="entry name" value="LMWPTPASE"/>
</dbReference>
<dbReference type="SMART" id="SM00226">
    <property type="entry name" value="LMWPc"/>
    <property type="match status" value="1"/>
</dbReference>
<dbReference type="SUPFAM" id="SSF52788">
    <property type="entry name" value="Phosphotyrosine protein phosphatases I"/>
    <property type="match status" value="1"/>
</dbReference>
<gene>
    <name type="primary">ptpA</name>
    <name type="ordered locus">SAB1813</name>
</gene>
<sequence length="154" mass="17551">MVDVAFVCLGNICRSPMAEAIMRQRLKDRNIHDIKVHSRGTGSWNLGEPPHEGTQKILNKHNIPFDGMISELFEATDDFDYIVAMDQSNVDNIKFINPNLKGQLFKLLEFSNMEESDVPDPYYTNNFEGVYDMVLSSCDNLIDYIVKDANLKEG</sequence>
<proteinExistence type="inferred from homology"/>
<reference key="1">
    <citation type="journal article" date="2007" name="PLoS ONE">
        <title>Molecular correlates of host specialization in Staphylococcus aureus.</title>
        <authorList>
            <person name="Herron-Olson L."/>
            <person name="Fitzgerald J.R."/>
            <person name="Musser J.M."/>
            <person name="Kapur V."/>
        </authorList>
    </citation>
    <scope>NUCLEOTIDE SEQUENCE [LARGE SCALE GENOMIC DNA]</scope>
    <source>
        <strain>bovine RF122 / ET3-1</strain>
    </source>
</reference>
<name>PTPA_STAAB</name>
<comment type="function">
    <text evidence="1">Secreted tyrosine phosphatase that plays a critical role during infection as a bacterial effector protein that counteracts host defenses. Required for intramacrophage survival.</text>
</comment>
<comment type="catalytic activity">
    <reaction evidence="1">
        <text>O-phospho-L-tyrosyl-[protein] + H2O = L-tyrosyl-[protein] + phosphate</text>
        <dbReference type="Rhea" id="RHEA:10684"/>
        <dbReference type="Rhea" id="RHEA-COMP:10136"/>
        <dbReference type="Rhea" id="RHEA-COMP:20101"/>
        <dbReference type="ChEBI" id="CHEBI:15377"/>
        <dbReference type="ChEBI" id="CHEBI:43474"/>
        <dbReference type="ChEBI" id="CHEBI:46858"/>
        <dbReference type="ChEBI" id="CHEBI:61978"/>
        <dbReference type="EC" id="3.1.3.48"/>
    </reaction>
</comment>
<comment type="subunit">
    <text evidence="1">Interacts with host CORO1A.</text>
</comment>
<comment type="subcellular location">
    <subcellularLocation>
        <location evidence="1">Secreted</location>
    </subcellularLocation>
    <text evidence="1">Secreted intracellularly upon bacterial infection of macrophages.</text>
</comment>
<comment type="PTM">
    <text evidence="1">Phosphorylations at Tyr-122 and Tyr-123 are essential for phosphatase activity.</text>
</comment>
<comment type="similarity">
    <text evidence="3">Belongs to the low molecular weight phosphotyrosine protein phosphatase family.</text>
</comment>
<feature type="chain" id="PRO_0000300657" description="Low molecular weight protein-tyrosine-phosphatase PtpA">
    <location>
        <begin position="1"/>
        <end position="154"/>
    </location>
</feature>
<feature type="active site" description="Nucleophile" evidence="2">
    <location>
        <position position="8"/>
    </location>
</feature>
<feature type="active site" evidence="2">
    <location>
        <position position="14"/>
    </location>
</feature>
<feature type="active site" description="Proton donor" evidence="2">
    <location>
        <position position="120"/>
    </location>
</feature>
<accession>Q2YU46</accession>
<keyword id="KW-0378">Hydrolase</keyword>
<keyword id="KW-0597">Phosphoprotein</keyword>
<keyword id="KW-0904">Protein phosphatase</keyword>
<keyword id="KW-0964">Secreted</keyword>
<organism>
    <name type="scientific">Staphylococcus aureus (strain bovine RF122 / ET3-1)</name>
    <dbReference type="NCBI Taxonomy" id="273036"/>
    <lineage>
        <taxon>Bacteria</taxon>
        <taxon>Bacillati</taxon>
        <taxon>Bacillota</taxon>
        <taxon>Bacilli</taxon>
        <taxon>Bacillales</taxon>
        <taxon>Staphylococcaceae</taxon>
        <taxon>Staphylococcus</taxon>
    </lineage>
</organism>
<protein>
    <recommendedName>
        <fullName>Low molecular weight protein-tyrosine-phosphatase PtpA</fullName>
        <ecNumber>3.1.3.48</ecNumber>
    </recommendedName>
    <alternativeName>
        <fullName>Phosphotyrosine phosphatase A</fullName>
        <shortName>PTPase A</shortName>
    </alternativeName>
</protein>
<evidence type="ECO:0000250" key="1">
    <source>
        <dbReference type="UniProtKB" id="A0A0H3K9F2"/>
    </source>
</evidence>
<evidence type="ECO:0000250" key="2">
    <source>
        <dbReference type="UniProtKB" id="P11064"/>
    </source>
</evidence>
<evidence type="ECO:0000305" key="3"/>